<accession>P9WM01</accession>
<accession>L0T819</accession>
<accession>Q11032</accession>
<reference key="1">
    <citation type="journal article" date="1998" name="Nature">
        <title>Deciphering the biology of Mycobacterium tuberculosis from the complete genome sequence.</title>
        <authorList>
            <person name="Cole S.T."/>
            <person name="Brosch R."/>
            <person name="Parkhill J."/>
            <person name="Garnier T."/>
            <person name="Churcher C.M."/>
            <person name="Harris D.E."/>
            <person name="Gordon S.V."/>
            <person name="Eiglmeier K."/>
            <person name="Gas S."/>
            <person name="Barry C.E. III"/>
            <person name="Tekaia F."/>
            <person name="Badcock K."/>
            <person name="Basham D."/>
            <person name="Brown D."/>
            <person name="Chillingworth T."/>
            <person name="Connor R."/>
            <person name="Davies R.M."/>
            <person name="Devlin K."/>
            <person name="Feltwell T."/>
            <person name="Gentles S."/>
            <person name="Hamlin N."/>
            <person name="Holroyd S."/>
            <person name="Hornsby T."/>
            <person name="Jagels K."/>
            <person name="Krogh A."/>
            <person name="McLean J."/>
            <person name="Moule S."/>
            <person name="Murphy L.D."/>
            <person name="Oliver S."/>
            <person name="Osborne J."/>
            <person name="Quail M.A."/>
            <person name="Rajandream M.A."/>
            <person name="Rogers J."/>
            <person name="Rutter S."/>
            <person name="Seeger K."/>
            <person name="Skelton S."/>
            <person name="Squares S."/>
            <person name="Squares R."/>
            <person name="Sulston J.E."/>
            <person name="Taylor K."/>
            <person name="Whitehead S."/>
            <person name="Barrell B.G."/>
        </authorList>
    </citation>
    <scope>NUCLEOTIDE SEQUENCE [LARGE SCALE GENOMIC DNA]</scope>
    <source>
        <strain>ATCC 25618 / H37Rv</strain>
    </source>
</reference>
<reference key="2">
    <citation type="journal article" date="2011" name="Mol. Cell. Proteomics">
        <title>Proteogenomic analysis of Mycobacterium tuberculosis by high resolution mass spectrometry.</title>
        <authorList>
            <person name="Kelkar D.S."/>
            <person name="Kumar D."/>
            <person name="Kumar P."/>
            <person name="Balakrishnan L."/>
            <person name="Muthusamy B."/>
            <person name="Yadav A.K."/>
            <person name="Shrivastava P."/>
            <person name="Marimuthu A."/>
            <person name="Anand S."/>
            <person name="Sundaram H."/>
            <person name="Kingsbury R."/>
            <person name="Harsha H.C."/>
            <person name="Nair B."/>
            <person name="Prasad T.S."/>
            <person name="Chauhan D.S."/>
            <person name="Katoch K."/>
            <person name="Katoch V.M."/>
            <person name="Kumar P."/>
            <person name="Chaerkady R."/>
            <person name="Ramachandran S."/>
            <person name="Dash D."/>
            <person name="Pandey A."/>
        </authorList>
    </citation>
    <scope>IDENTIFICATION BY MASS SPECTROMETRY [LARGE SCALE ANALYSIS]</scope>
    <source>
        <strain>ATCC 25618 / H37Rv</strain>
    </source>
</reference>
<gene>
    <name type="ordered locus">Rv1362c</name>
    <name type="ORF">MTCY02B10.26c</name>
</gene>
<dbReference type="EMBL" id="AL123456">
    <property type="protein sequence ID" value="CCP44120.1"/>
    <property type="molecule type" value="Genomic_DNA"/>
</dbReference>
<dbReference type="PIR" id="A70742">
    <property type="entry name" value="A70742"/>
</dbReference>
<dbReference type="RefSeq" id="NP_215878.1">
    <property type="nucleotide sequence ID" value="NC_000962.3"/>
</dbReference>
<dbReference type="RefSeq" id="WP_003407152.1">
    <property type="nucleotide sequence ID" value="NZ_NVQJ01000031.1"/>
</dbReference>
<dbReference type="STRING" id="83332.Rv1362c"/>
<dbReference type="PaxDb" id="83332-Rv1362c"/>
<dbReference type="DNASU" id="886809"/>
<dbReference type="GeneID" id="886809"/>
<dbReference type="KEGG" id="mtu:Rv1362c"/>
<dbReference type="KEGG" id="mtv:RVBD_1362c"/>
<dbReference type="TubercuList" id="Rv1362c"/>
<dbReference type="eggNOG" id="COG0443">
    <property type="taxonomic scope" value="Bacteria"/>
</dbReference>
<dbReference type="InParanoid" id="P9WM01"/>
<dbReference type="OrthoDB" id="5196392at2"/>
<dbReference type="PhylomeDB" id="P9WM01"/>
<dbReference type="Proteomes" id="UP000001584">
    <property type="component" value="Chromosome"/>
</dbReference>
<dbReference type="GO" id="GO:0005886">
    <property type="term" value="C:plasma membrane"/>
    <property type="evidence" value="ECO:0007005"/>
    <property type="project" value="MTBBASE"/>
</dbReference>
<dbReference type="Gene3D" id="3.10.450.50">
    <property type="match status" value="1"/>
</dbReference>
<dbReference type="PANTHER" id="PTHR37042">
    <property type="entry name" value="OUTER MEMBRANE PROTEIN RV1973"/>
    <property type="match status" value="1"/>
</dbReference>
<dbReference type="PANTHER" id="PTHR37042:SF4">
    <property type="entry name" value="OUTER MEMBRANE PROTEIN RV1973"/>
    <property type="match status" value="1"/>
</dbReference>
<name>Y1362_MYCTU</name>
<feature type="chain" id="PRO_0000103831" description="Uncharacterized protein Rv1362c">
    <location>
        <begin position="1"/>
        <end position="220"/>
    </location>
</feature>
<feature type="transmembrane region" description="Helical" evidence="1">
    <location>
        <begin position="65"/>
        <end position="85"/>
    </location>
</feature>
<feature type="region of interest" description="Disordered" evidence="2">
    <location>
        <begin position="1"/>
        <end position="50"/>
    </location>
</feature>
<feature type="compositionally biased region" description="Polar residues" evidence="2">
    <location>
        <begin position="39"/>
        <end position="48"/>
    </location>
</feature>
<keyword id="KW-0472">Membrane</keyword>
<keyword id="KW-1185">Reference proteome</keyword>
<keyword id="KW-0812">Transmembrane</keyword>
<keyword id="KW-1133">Transmembrane helix</keyword>
<evidence type="ECO:0000255" key="1"/>
<evidence type="ECO:0000256" key="2">
    <source>
        <dbReference type="SAM" id="MobiDB-lite"/>
    </source>
</evidence>
<evidence type="ECO:0000305" key="3"/>
<comment type="subcellular location">
    <subcellularLocation>
        <location evidence="3">Membrane</location>
        <topology evidence="3">Single-pass membrane protein</topology>
    </subcellularLocation>
</comment>
<comment type="similarity">
    <text evidence="3">To M.tuberculosis Rv1363c.</text>
</comment>
<protein>
    <recommendedName>
        <fullName>Uncharacterized protein Rv1362c</fullName>
    </recommendedName>
</protein>
<organism>
    <name type="scientific">Mycobacterium tuberculosis (strain ATCC 25618 / H37Rv)</name>
    <dbReference type="NCBI Taxonomy" id="83332"/>
    <lineage>
        <taxon>Bacteria</taxon>
        <taxon>Bacillati</taxon>
        <taxon>Actinomycetota</taxon>
        <taxon>Actinomycetes</taxon>
        <taxon>Mycobacteriales</taxon>
        <taxon>Mycobacteriaceae</taxon>
        <taxon>Mycobacterium</taxon>
        <taxon>Mycobacterium tuberculosis complex</taxon>
    </lineage>
</organism>
<sequence>MTDDVRDVNTETTDATEVAEIDSAAGEAGDSATEAFDTDSATESTAQKGQRHRDLWRMQVTLKPVPVILILLMLISGGATGWLYLEQYRPDQQTDSGAARAAVAAASDGTIALLSYSPDTLDQDFATARSHLAGDFLSYYDQFTQQIVAPAAKQKSLKTTAKVVRAAVSELHPDSAVVLVFVDQSTTSKDSPNPSMAASSVMVTLAKVDGNWLITKFTPV</sequence>
<proteinExistence type="evidence at protein level"/>